<name>PTHP_TREPA</name>
<organism>
    <name type="scientific">Treponema pallidum (strain Nichols)</name>
    <dbReference type="NCBI Taxonomy" id="243276"/>
    <lineage>
        <taxon>Bacteria</taxon>
        <taxon>Pseudomonadati</taxon>
        <taxon>Spirochaetota</taxon>
        <taxon>Spirochaetia</taxon>
        <taxon>Spirochaetales</taxon>
        <taxon>Treponemataceae</taxon>
        <taxon>Treponema</taxon>
    </lineage>
</organism>
<comment type="function">
    <text evidence="1">General (non sugar-specific) component of the phosphoenolpyruvate-dependent sugar phosphotransferase system (sugar PTS). This major carbohydrate active-transport system catalyzes the phosphorylation of incoming sugar substrates concomitantly with their translocation across the cell membrane. The phosphoryl group from phosphoenolpyruvate (PEP) is transferred to the phosphoryl carrier protein HPr by enzyme I. Phospho-HPr then transfers it to the PTS EIIA domain.</text>
</comment>
<comment type="activity regulation">
    <text evidence="1">Phosphorylation on Ser-46 inhibits the phosphoryl transfer from enzyme I to HPr.</text>
</comment>
<comment type="subcellular location">
    <subcellularLocation>
        <location evidence="1">Cytoplasm</location>
    </subcellularLocation>
</comment>
<comment type="similarity">
    <text evidence="3">Belongs to the HPr family.</text>
</comment>
<keyword id="KW-0963">Cytoplasm</keyword>
<keyword id="KW-0597">Phosphoprotein</keyword>
<keyword id="KW-0598">Phosphotransferase system</keyword>
<keyword id="KW-1185">Reference proteome</keyword>
<keyword id="KW-0762">Sugar transport</keyword>
<keyword id="KW-0813">Transport</keyword>
<gene>
    <name type="primary">ptsH</name>
    <name type="ordered locus">TP_0589</name>
</gene>
<accession>O83598</accession>
<protein>
    <recommendedName>
        <fullName>Phosphocarrier protein HPr</fullName>
    </recommendedName>
    <alternativeName>
        <fullName>Histidine-containing protein</fullName>
    </alternativeName>
</protein>
<sequence length="88" mass="9527">MVVKTVRVLNRAGVHARPAALIVQAASRFDSKIMLVRDTIRVNAKSIMGVMAMAAGCGSELELVVEGPDEVAALSAIERLFQNKFEEE</sequence>
<evidence type="ECO:0000250" key="1"/>
<evidence type="ECO:0000255" key="2">
    <source>
        <dbReference type="PROSITE-ProRule" id="PRU00681"/>
    </source>
</evidence>
<evidence type="ECO:0000305" key="3"/>
<proteinExistence type="inferred from homology"/>
<feature type="chain" id="PRO_0000107887" description="Phosphocarrier protein HPr">
    <location>
        <begin position="1"/>
        <end position="88"/>
    </location>
</feature>
<feature type="domain" description="HPr" evidence="2">
    <location>
        <begin position="1"/>
        <end position="88"/>
    </location>
</feature>
<feature type="active site" description="Pros-phosphohistidine intermediate" evidence="2">
    <location>
        <position position="15"/>
    </location>
</feature>
<feature type="modified residue" description="Phosphoserine; by HPrK/P" evidence="2">
    <location>
        <position position="46"/>
    </location>
</feature>
<reference key="1">
    <citation type="journal article" date="1998" name="Science">
        <title>Complete genome sequence of Treponema pallidum, the syphilis spirochete.</title>
        <authorList>
            <person name="Fraser C.M."/>
            <person name="Norris S.J."/>
            <person name="Weinstock G.M."/>
            <person name="White O."/>
            <person name="Sutton G.G."/>
            <person name="Dodson R.J."/>
            <person name="Gwinn M.L."/>
            <person name="Hickey E.K."/>
            <person name="Clayton R.A."/>
            <person name="Ketchum K.A."/>
            <person name="Sodergren E."/>
            <person name="Hardham J.M."/>
            <person name="McLeod M.P."/>
            <person name="Salzberg S.L."/>
            <person name="Peterson J.D."/>
            <person name="Khalak H.G."/>
            <person name="Richardson D.L."/>
            <person name="Howell J.K."/>
            <person name="Chidambaram M."/>
            <person name="Utterback T.R."/>
            <person name="McDonald L.A."/>
            <person name="Artiach P."/>
            <person name="Bowman C."/>
            <person name="Cotton M.D."/>
            <person name="Fujii C."/>
            <person name="Garland S.A."/>
            <person name="Hatch B."/>
            <person name="Horst K."/>
            <person name="Roberts K.M."/>
            <person name="Sandusky M."/>
            <person name="Weidman J.F."/>
            <person name="Smith H.O."/>
            <person name="Venter J.C."/>
        </authorList>
    </citation>
    <scope>NUCLEOTIDE SEQUENCE [LARGE SCALE GENOMIC DNA]</scope>
    <source>
        <strain>Nichols</strain>
    </source>
</reference>
<dbReference type="EMBL" id="AE000520">
    <property type="protein sequence ID" value="AAC65564.1"/>
    <property type="molecule type" value="Genomic_DNA"/>
</dbReference>
<dbReference type="PIR" id="F71305">
    <property type="entry name" value="F71305"/>
</dbReference>
<dbReference type="RefSeq" id="WP_010882035.1">
    <property type="nucleotide sequence ID" value="NC_021490.2"/>
</dbReference>
<dbReference type="SMR" id="O83598"/>
<dbReference type="IntAct" id="O83598">
    <property type="interactions" value="3"/>
</dbReference>
<dbReference type="STRING" id="243276.TP_0589"/>
<dbReference type="EnsemblBacteria" id="AAC65564">
    <property type="protein sequence ID" value="AAC65564"/>
    <property type="gene ID" value="TP_0589"/>
</dbReference>
<dbReference type="KEGG" id="tpa:TP_0589"/>
<dbReference type="KEGG" id="tpw:TPANIC_0589"/>
<dbReference type="eggNOG" id="COG1925">
    <property type="taxonomic scope" value="Bacteria"/>
</dbReference>
<dbReference type="HOGENOM" id="CLU_136230_2_2_12"/>
<dbReference type="OrthoDB" id="9809047at2"/>
<dbReference type="Proteomes" id="UP000000811">
    <property type="component" value="Chromosome"/>
</dbReference>
<dbReference type="GO" id="GO:0005737">
    <property type="term" value="C:cytoplasm"/>
    <property type="evidence" value="ECO:0007669"/>
    <property type="project" value="UniProtKB-SubCell"/>
</dbReference>
<dbReference type="GO" id="GO:0009401">
    <property type="term" value="P:phosphoenolpyruvate-dependent sugar phosphotransferase system"/>
    <property type="evidence" value="ECO:0007669"/>
    <property type="project" value="UniProtKB-KW"/>
</dbReference>
<dbReference type="CDD" id="cd00367">
    <property type="entry name" value="PTS-HPr_like"/>
    <property type="match status" value="1"/>
</dbReference>
<dbReference type="Gene3D" id="3.30.1340.10">
    <property type="entry name" value="HPr-like"/>
    <property type="match status" value="1"/>
</dbReference>
<dbReference type="InterPro" id="IPR050399">
    <property type="entry name" value="HPr"/>
</dbReference>
<dbReference type="InterPro" id="IPR000032">
    <property type="entry name" value="HPr-like"/>
</dbReference>
<dbReference type="InterPro" id="IPR035895">
    <property type="entry name" value="HPr-like_sf"/>
</dbReference>
<dbReference type="InterPro" id="IPR001020">
    <property type="entry name" value="PTS_HPr_His_P_site"/>
</dbReference>
<dbReference type="InterPro" id="IPR002114">
    <property type="entry name" value="PTS_HPr_Ser_P_site"/>
</dbReference>
<dbReference type="NCBIfam" id="TIGR01003">
    <property type="entry name" value="PTS_HPr_family"/>
    <property type="match status" value="1"/>
</dbReference>
<dbReference type="PANTHER" id="PTHR33705">
    <property type="entry name" value="PHOSPHOCARRIER PROTEIN HPR"/>
    <property type="match status" value="1"/>
</dbReference>
<dbReference type="PANTHER" id="PTHR33705:SF2">
    <property type="entry name" value="PHOSPHOCARRIER PROTEIN NPR"/>
    <property type="match status" value="1"/>
</dbReference>
<dbReference type="Pfam" id="PF00381">
    <property type="entry name" value="PTS-HPr"/>
    <property type="match status" value="1"/>
</dbReference>
<dbReference type="PRINTS" id="PR00107">
    <property type="entry name" value="PHOSPHOCPHPR"/>
</dbReference>
<dbReference type="SUPFAM" id="SSF55594">
    <property type="entry name" value="HPr-like"/>
    <property type="match status" value="1"/>
</dbReference>
<dbReference type="PROSITE" id="PS51350">
    <property type="entry name" value="PTS_HPR_DOM"/>
    <property type="match status" value="1"/>
</dbReference>
<dbReference type="PROSITE" id="PS00369">
    <property type="entry name" value="PTS_HPR_HIS"/>
    <property type="match status" value="1"/>
</dbReference>
<dbReference type="PROSITE" id="PS00589">
    <property type="entry name" value="PTS_HPR_SER"/>
    <property type="match status" value="1"/>
</dbReference>